<accession>Q9AJ80</accession>
<organism>
    <name type="scientific">Rickettsia slovaca</name>
    <dbReference type="NCBI Taxonomy" id="35794"/>
    <lineage>
        <taxon>Bacteria</taxon>
        <taxon>Pseudomonadati</taxon>
        <taxon>Pseudomonadota</taxon>
        <taxon>Alphaproteobacteria</taxon>
        <taxon>Rickettsiales</taxon>
        <taxon>Rickettsiaceae</taxon>
        <taxon>Rickettsieae</taxon>
        <taxon>Rickettsia</taxon>
        <taxon>spotted fever group</taxon>
    </lineage>
</organism>
<protein>
    <recommendedName>
        <fullName>Antigenic heat-stable 120 kDa protein</fullName>
    </recommendedName>
    <alternativeName>
        <fullName>120 kDa antigen</fullName>
    </alternativeName>
    <alternativeName>
        <fullName>Protein PS 120</fullName>
        <shortName>PS120</shortName>
    </alternativeName>
</protein>
<evidence type="ECO:0000256" key="1">
    <source>
        <dbReference type="SAM" id="MobiDB-lite"/>
    </source>
</evidence>
<evidence type="ECO:0000305" key="2"/>
<name>SCA4_RICSL</name>
<feature type="chain" id="PRO_0000097618" description="Antigenic heat-stable 120 kDa protein">
    <location>
        <begin position="1" status="less than"/>
        <end position="1012" status="greater than"/>
    </location>
</feature>
<feature type="region of interest" description="Disordered" evidence="1">
    <location>
        <begin position="1"/>
        <end position="73"/>
    </location>
</feature>
<feature type="region of interest" description="Disordered" evidence="1">
    <location>
        <begin position="348"/>
        <end position="396"/>
    </location>
</feature>
<feature type="compositionally biased region" description="Basic and acidic residues" evidence="1">
    <location>
        <begin position="12"/>
        <end position="27"/>
    </location>
</feature>
<feature type="compositionally biased region" description="Low complexity" evidence="1">
    <location>
        <begin position="47"/>
        <end position="61"/>
    </location>
</feature>
<feature type="compositionally biased region" description="Polar residues" evidence="1">
    <location>
        <begin position="62"/>
        <end position="73"/>
    </location>
</feature>
<feature type="compositionally biased region" description="Polar residues" evidence="1">
    <location>
        <begin position="348"/>
        <end position="373"/>
    </location>
</feature>
<feature type="compositionally biased region" description="Polar residues" evidence="1">
    <location>
        <begin position="380"/>
        <end position="396"/>
    </location>
</feature>
<feature type="non-terminal residue">
    <location>
        <position position="1"/>
    </location>
</feature>
<feature type="non-terminal residue">
    <location>
        <position position="1012"/>
    </location>
</feature>
<reference key="1">
    <citation type="journal article" date="2001" name="Int. J. Syst. Evol. Microbiol.">
        <title>Phylogeny of Rickettsia spp. inferred by comparing sequences of 'gene D', which encodes an intracytoplasmic protein.</title>
        <authorList>
            <person name="Sekeyova Z."/>
            <person name="Roux V."/>
            <person name="Raoult D."/>
        </authorList>
    </citation>
    <scope>NUCLEOTIDE SEQUENCE [GENOMIC DNA]</scope>
</reference>
<sequence>DTSEFDPLANKEYTEEQKQTLEQEQKEFLSQTTTPALEADDGFIVTSASSAQSTPSMSALSGNISPDSQTSDPITKAVRETIIQPQKDNLIEQILKDLAALTDRDLAEQKRKEIEEEKEKDKTLSTFFGNPANREFIDKALENPELKKKLESIEIAGYKNVHNTFSAASGYPGGFKPVQWENHVSASDLRATVVKNDAGDELCTLNETTVKTKPFTLAKQDGTQVQISSYREIDFPIKLDKADGSMHLSMVALKADGTKPSKDKAVYFTAHYEEGPNGKPQLKEISSPKPLKFAGTGDDAIAYIEHGGEIYTLAVTRGKYKEMMKEVELNQGQSVDLSQAEDIIIGQGQSKEQPLITPQQTTSSSVEPPQYKQQVPPITPTNQPLQAETSQMPQSQQVNPNLLNTATALSGSMQDLLNYVNAGLTKEIDSNKQIDLIKEAAKAILNNEKSDIAEKQANIIALAENTVNNKNLKPDAKVAGVNAVLETIKNDQNTPDLEKSKMLEATVAIVLNSENLEPKQKQQMLEKAVDVGLSLKDDASRAAAIDGIKDVVIKSNLSPEDKGTMLIAVGDKVNVSELSNAEKQKLLGSVLKKKGVEAQVLSPAQQQLMQQHLYKITAEQTKKDTIKKVNDILFDPLSNTELKTTNIQAITSNVLDGPATAEVKGEIIQEITNTVAGSSLEAQDKAAIIKGVGETIATHSDTSLSLPNKALIMASAEKGIAESQTNLPDRELMTKGLVDGIYEGKGGPEITKAVSSGIDNSNINDSEKEALKKAKDAASEAALDRDTQNLTEGFKGQNIEEHKPHDDIYNKAREVINAVNPVIEALEKFKEPVVSAEERIVQETSSILNNISKLAVEKVNNFRAMLSPTGNLKTLEEKKEESIKKVDELVKAFGTKSSTEEQQSFIKTNLIDDKTLSKEVRLQTIDKLLQEQKRAEAIENPSVKTEDVRVVSGKSKLKPISKDNPDIEKAKMVVGRDRVNIKGNIKIMGALMNARDIIQSENLNKSTPIKRE</sequence>
<dbReference type="EMBL" id="AF155054">
    <property type="protein sequence ID" value="AAK30685.1"/>
    <property type="molecule type" value="Genomic_DNA"/>
</dbReference>
<dbReference type="SMR" id="Q9AJ80"/>
<dbReference type="GO" id="GO:0005737">
    <property type="term" value="C:cytoplasm"/>
    <property type="evidence" value="ECO:0007669"/>
    <property type="project" value="UniProtKB-SubCell"/>
</dbReference>
<dbReference type="InterPro" id="IPR020954">
    <property type="entry name" value="Rickettsia_antigen_120kDa"/>
</dbReference>
<dbReference type="NCBIfam" id="NF038365">
    <property type="entry name" value="Sca4_fam"/>
    <property type="match status" value="1"/>
</dbReference>
<dbReference type="Pfam" id="PF12574">
    <property type="entry name" value="120_Rick_ant"/>
    <property type="match status" value="1"/>
</dbReference>
<keyword id="KW-0963">Cytoplasm</keyword>
<proteinExistence type="predicted"/>
<gene>
    <name type="primary">sca4</name>
    <name type="synonym">D</name>
</gene>
<comment type="subcellular location">
    <subcellularLocation>
        <location evidence="2">Cytoplasm</location>
    </subcellularLocation>
</comment>